<organism>
    <name type="scientific">Dictyostelium discoideum</name>
    <name type="common">Social amoeba</name>
    <dbReference type="NCBI Taxonomy" id="44689"/>
    <lineage>
        <taxon>Eukaryota</taxon>
        <taxon>Amoebozoa</taxon>
        <taxon>Evosea</taxon>
        <taxon>Eumycetozoa</taxon>
        <taxon>Dictyostelia</taxon>
        <taxon>Dictyosteliales</taxon>
        <taxon>Dictyosteliaceae</taxon>
        <taxon>Dictyostelium</taxon>
    </lineage>
</organism>
<comment type="function">
    <text evidence="2 3">Catalyzes the cis-trans isomerization of proline imidic peptide bonds in oligopeptides (PubMed:11690648). Plays a role in protein folding, transport and assembly (PubMed:11690648).</text>
</comment>
<comment type="catalytic activity">
    <reaction evidence="2">
        <text>[protein]-peptidylproline (omega=180) = [protein]-peptidylproline (omega=0)</text>
        <dbReference type="Rhea" id="RHEA:16237"/>
        <dbReference type="Rhea" id="RHEA-COMP:10747"/>
        <dbReference type="Rhea" id="RHEA-COMP:10748"/>
        <dbReference type="ChEBI" id="CHEBI:83833"/>
        <dbReference type="ChEBI" id="CHEBI:83834"/>
        <dbReference type="EC" id="5.2.1.8"/>
    </reaction>
    <physiologicalReaction direction="right-to-left" evidence="2">
        <dbReference type="Rhea" id="RHEA:16239"/>
    </physiologicalReaction>
</comment>
<comment type="subunit">
    <text evidence="2">Interacts with snwA.</text>
</comment>
<comment type="interaction">
    <interactant intactId="EBI-1810601">
        <id>Q9NI62</id>
    </interactant>
    <interactant intactId="EBI-1810591">
        <id>P54705</id>
        <label>snwA</label>
    </interactant>
    <organismsDiffer>false</organismsDiffer>
    <experiments>5</experiments>
</comment>
<comment type="subcellular location">
    <subcellularLocation>
        <location evidence="2">Cytoplasm</location>
    </subcellularLocation>
    <subcellularLocation>
        <location evidence="2">Nucleus</location>
    </subcellularLocation>
</comment>
<comment type="similarity">
    <text evidence="4">Belongs to the cyclophilin-type PPIase family.</text>
</comment>
<feature type="chain" id="PRO_0000064170" description="Peptidyl-prolyl cis-trans isomerase cypE">
    <location>
        <begin position="1"/>
        <end position="156"/>
    </location>
</feature>
<feature type="domain" description="PPIase cyclophilin-type" evidence="1">
    <location>
        <begin position="2"/>
        <end position="155"/>
    </location>
</feature>
<reference key="1">
    <citation type="journal article" date="2001" name="Biochim. Biophys. Acta">
        <title>Cyclophilins of a novel subfamily interact with SNW/SKIP coregulator in Dictyostelium discoideum and Schizosaccharomyces pombe.</title>
        <authorList>
            <person name="Skruzny M."/>
            <person name="Ambrozkova M."/>
            <person name="Fukova I."/>
            <person name="Martinkova K."/>
            <person name="Blahuskova A."/>
            <person name="Hamplova L."/>
            <person name="Puta F."/>
            <person name="Folk P."/>
        </authorList>
    </citation>
    <scope>NUCLEOTIDE SEQUENCE [MRNA]</scope>
    <scope>FUNCTION</scope>
    <scope>CATALYTIC ACTIVITY</scope>
    <scope>SUBCELLULAR LOCATION</scope>
    <scope>INTERACTION WITH SNWA</scope>
    <source>
        <strain>AX3</strain>
    </source>
</reference>
<reference key="2">
    <citation type="journal article" date="2005" name="Nature">
        <title>The genome of the social amoeba Dictyostelium discoideum.</title>
        <authorList>
            <person name="Eichinger L."/>
            <person name="Pachebat J.A."/>
            <person name="Gloeckner G."/>
            <person name="Rajandream M.A."/>
            <person name="Sucgang R."/>
            <person name="Berriman M."/>
            <person name="Song J."/>
            <person name="Olsen R."/>
            <person name="Szafranski K."/>
            <person name="Xu Q."/>
            <person name="Tunggal B."/>
            <person name="Kummerfeld S."/>
            <person name="Madera M."/>
            <person name="Konfortov B.A."/>
            <person name="Rivero F."/>
            <person name="Bankier A.T."/>
            <person name="Lehmann R."/>
            <person name="Hamlin N."/>
            <person name="Davies R."/>
            <person name="Gaudet P."/>
            <person name="Fey P."/>
            <person name="Pilcher K."/>
            <person name="Chen G."/>
            <person name="Saunders D."/>
            <person name="Sodergren E.J."/>
            <person name="Davis P."/>
            <person name="Kerhornou A."/>
            <person name="Nie X."/>
            <person name="Hall N."/>
            <person name="Anjard C."/>
            <person name="Hemphill L."/>
            <person name="Bason N."/>
            <person name="Farbrother P."/>
            <person name="Desany B."/>
            <person name="Just E."/>
            <person name="Morio T."/>
            <person name="Rost R."/>
            <person name="Churcher C.M."/>
            <person name="Cooper J."/>
            <person name="Haydock S."/>
            <person name="van Driessche N."/>
            <person name="Cronin A."/>
            <person name="Goodhead I."/>
            <person name="Muzny D.M."/>
            <person name="Mourier T."/>
            <person name="Pain A."/>
            <person name="Lu M."/>
            <person name="Harper D."/>
            <person name="Lindsay R."/>
            <person name="Hauser H."/>
            <person name="James K.D."/>
            <person name="Quiles M."/>
            <person name="Madan Babu M."/>
            <person name="Saito T."/>
            <person name="Buchrieser C."/>
            <person name="Wardroper A."/>
            <person name="Felder M."/>
            <person name="Thangavelu M."/>
            <person name="Johnson D."/>
            <person name="Knights A."/>
            <person name="Loulseged H."/>
            <person name="Mungall K.L."/>
            <person name="Oliver K."/>
            <person name="Price C."/>
            <person name="Quail M.A."/>
            <person name="Urushihara H."/>
            <person name="Hernandez J."/>
            <person name="Rabbinowitsch E."/>
            <person name="Steffen D."/>
            <person name="Sanders M."/>
            <person name="Ma J."/>
            <person name="Kohara Y."/>
            <person name="Sharp S."/>
            <person name="Simmonds M.N."/>
            <person name="Spiegler S."/>
            <person name="Tivey A."/>
            <person name="Sugano S."/>
            <person name="White B."/>
            <person name="Walker D."/>
            <person name="Woodward J.R."/>
            <person name="Winckler T."/>
            <person name="Tanaka Y."/>
            <person name="Shaulsky G."/>
            <person name="Schleicher M."/>
            <person name="Weinstock G.M."/>
            <person name="Rosenthal A."/>
            <person name="Cox E.C."/>
            <person name="Chisholm R.L."/>
            <person name="Gibbs R.A."/>
            <person name="Loomis W.F."/>
            <person name="Platzer M."/>
            <person name="Kay R.R."/>
            <person name="Williams J.G."/>
            <person name="Dear P.H."/>
            <person name="Noegel A.A."/>
            <person name="Barrell B.G."/>
            <person name="Kuspa A."/>
        </authorList>
    </citation>
    <scope>NUCLEOTIDE SEQUENCE [LARGE SCALE GENOMIC DNA]</scope>
    <source>
        <strain>AX4</strain>
    </source>
</reference>
<keyword id="KW-0963">Cytoplasm</keyword>
<keyword id="KW-0413">Isomerase</keyword>
<keyword id="KW-0539">Nucleus</keyword>
<keyword id="KW-1185">Reference proteome</keyword>
<keyword id="KW-0697">Rotamase</keyword>
<protein>
    <recommendedName>
        <fullName evidence="3">Peptidyl-prolyl cis-trans isomerase cypE</fullName>
        <shortName>PPIase cypE</shortName>
        <ecNumber evidence="2">5.2.1.8</ecNumber>
    </recommendedName>
    <alternativeName>
        <fullName evidence="3">Cyclophilin cypE</fullName>
    </alternativeName>
    <alternativeName>
        <fullName>Rotamase cypE</fullName>
    </alternativeName>
</protein>
<name>CYPE_DICDI</name>
<accession>Q9NI62</accession>
<accession>Q55D92</accession>
<dbReference type="EC" id="5.2.1.8" evidence="2"/>
<dbReference type="EMBL" id="AF215865">
    <property type="protein sequence ID" value="AAF28343.2"/>
    <property type="molecule type" value="mRNA"/>
</dbReference>
<dbReference type="EMBL" id="AAFI02000005">
    <property type="protein sequence ID" value="EAL71958.1"/>
    <property type="molecule type" value="Genomic_DNA"/>
</dbReference>
<dbReference type="RefSeq" id="XP_646239.1">
    <property type="nucleotide sequence ID" value="XM_641147.1"/>
</dbReference>
<dbReference type="SMR" id="Q9NI62"/>
<dbReference type="FunCoup" id="Q9NI62">
    <property type="interactions" value="941"/>
</dbReference>
<dbReference type="IntAct" id="Q9NI62">
    <property type="interactions" value="1"/>
</dbReference>
<dbReference type="STRING" id="44689.Q9NI62"/>
<dbReference type="GlyGen" id="Q9NI62">
    <property type="glycosylation" value="1 site"/>
</dbReference>
<dbReference type="PaxDb" id="44689-DDB0191208"/>
<dbReference type="EnsemblProtists" id="EAL71958">
    <property type="protein sequence ID" value="EAL71958"/>
    <property type="gene ID" value="DDB_G0269216"/>
</dbReference>
<dbReference type="GeneID" id="8617195"/>
<dbReference type="KEGG" id="ddi:DDB_G0269216"/>
<dbReference type="dictyBase" id="DDB_G0269216">
    <property type="gene designation" value="cypE"/>
</dbReference>
<dbReference type="VEuPathDB" id="AmoebaDB:DDB_G0269216"/>
<dbReference type="eggNOG" id="KOG0881">
    <property type="taxonomic scope" value="Eukaryota"/>
</dbReference>
<dbReference type="HOGENOM" id="CLU_012062_16_3_1"/>
<dbReference type="InParanoid" id="Q9NI62"/>
<dbReference type="OMA" id="ELYNDHA"/>
<dbReference type="PhylomeDB" id="Q9NI62"/>
<dbReference type="Reactome" id="R-DDI-72163">
    <property type="pathway name" value="mRNA Splicing - Major Pathway"/>
</dbReference>
<dbReference type="PRO" id="PR:Q9NI62"/>
<dbReference type="Proteomes" id="UP000002195">
    <property type="component" value="Chromosome 1"/>
</dbReference>
<dbReference type="GO" id="GO:0071013">
    <property type="term" value="C:catalytic step 2 spliceosome"/>
    <property type="evidence" value="ECO:0000318"/>
    <property type="project" value="GO_Central"/>
</dbReference>
<dbReference type="GO" id="GO:0005829">
    <property type="term" value="C:cytosol"/>
    <property type="evidence" value="ECO:0000314"/>
    <property type="project" value="dictyBase"/>
</dbReference>
<dbReference type="GO" id="GO:0005634">
    <property type="term" value="C:nucleus"/>
    <property type="evidence" value="ECO:0000314"/>
    <property type="project" value="dictyBase"/>
</dbReference>
<dbReference type="GO" id="GO:0003755">
    <property type="term" value="F:peptidyl-prolyl cis-trans isomerase activity"/>
    <property type="evidence" value="ECO:0000314"/>
    <property type="project" value="dictyBase"/>
</dbReference>
<dbReference type="GO" id="GO:0000398">
    <property type="term" value="P:mRNA splicing, via spliceosome"/>
    <property type="evidence" value="ECO:0000318"/>
    <property type="project" value="GO_Central"/>
</dbReference>
<dbReference type="GO" id="GO:0006457">
    <property type="term" value="P:protein folding"/>
    <property type="evidence" value="ECO:0000318"/>
    <property type="project" value="GO_Central"/>
</dbReference>
<dbReference type="CDD" id="cd01922">
    <property type="entry name" value="cyclophilin_SpCYP2_like"/>
    <property type="match status" value="1"/>
</dbReference>
<dbReference type="FunFam" id="2.40.100.10:FF:000008">
    <property type="entry name" value="Peptidyl-prolyl cis-trans isomerase"/>
    <property type="match status" value="1"/>
</dbReference>
<dbReference type="Gene3D" id="2.40.100.10">
    <property type="entry name" value="Cyclophilin-like"/>
    <property type="match status" value="1"/>
</dbReference>
<dbReference type="InterPro" id="IPR029000">
    <property type="entry name" value="Cyclophilin-like_dom_sf"/>
</dbReference>
<dbReference type="InterPro" id="IPR024936">
    <property type="entry name" value="Cyclophilin-type_PPIase"/>
</dbReference>
<dbReference type="InterPro" id="IPR020892">
    <property type="entry name" value="Cyclophilin-type_PPIase_CS"/>
</dbReference>
<dbReference type="InterPro" id="IPR002130">
    <property type="entry name" value="Cyclophilin-type_PPIase_dom"/>
</dbReference>
<dbReference type="InterPro" id="IPR044666">
    <property type="entry name" value="Cyclophilin_A-like"/>
</dbReference>
<dbReference type="PANTHER" id="PTHR45625">
    <property type="entry name" value="PEPTIDYL-PROLYL CIS-TRANS ISOMERASE-RELATED"/>
    <property type="match status" value="1"/>
</dbReference>
<dbReference type="PANTHER" id="PTHR45625:SF4">
    <property type="entry name" value="PEPTIDYLPROLYL ISOMERASE DOMAIN AND WD REPEAT-CONTAINING PROTEIN 1"/>
    <property type="match status" value="1"/>
</dbReference>
<dbReference type="Pfam" id="PF00160">
    <property type="entry name" value="Pro_isomerase"/>
    <property type="match status" value="1"/>
</dbReference>
<dbReference type="PIRSF" id="PIRSF001467">
    <property type="entry name" value="Peptidylpro_ismrse"/>
    <property type="match status" value="1"/>
</dbReference>
<dbReference type="PRINTS" id="PR00153">
    <property type="entry name" value="CSAPPISMRASE"/>
</dbReference>
<dbReference type="SUPFAM" id="SSF50891">
    <property type="entry name" value="Cyclophilin-like"/>
    <property type="match status" value="1"/>
</dbReference>
<dbReference type="PROSITE" id="PS00170">
    <property type="entry name" value="CSA_PPIASE_1"/>
    <property type="match status" value="1"/>
</dbReference>
<dbReference type="PROSITE" id="PS50072">
    <property type="entry name" value="CSA_PPIASE_2"/>
    <property type="match status" value="1"/>
</dbReference>
<sequence>MTEQTVTLQTTVGDITLELYYNHAPKACKNFYELSKRGYYDNTIFHRLIKDFMIQGGDPLGNGRGGESIYGKKFEDEITKELKHTGAGILSMANSGVNSNGSQFFITFGPTPWLDGKHTIFGRVKSGMKVVQKMNAMQTNNDKPIDEIRIIKATAN</sequence>
<evidence type="ECO:0000255" key="1">
    <source>
        <dbReference type="PROSITE-ProRule" id="PRU00156"/>
    </source>
</evidence>
<evidence type="ECO:0000269" key="2">
    <source>
    </source>
</evidence>
<evidence type="ECO:0000303" key="3">
    <source>
    </source>
</evidence>
<evidence type="ECO:0000305" key="4"/>
<gene>
    <name type="primary">cypE</name>
    <name type="ORF">DDB_G0269216</name>
</gene>
<proteinExistence type="evidence at protein level"/>